<name>SYS_MYCCT</name>
<organism>
    <name type="scientific">Mycoplasma capricolum subsp. capricolum (strain California kid / ATCC 27343 / NCTC 10154)</name>
    <dbReference type="NCBI Taxonomy" id="340047"/>
    <lineage>
        <taxon>Bacteria</taxon>
        <taxon>Bacillati</taxon>
        <taxon>Mycoplasmatota</taxon>
        <taxon>Mollicutes</taxon>
        <taxon>Mycoplasmataceae</taxon>
        <taxon>Mycoplasma</taxon>
    </lineage>
</organism>
<protein>
    <recommendedName>
        <fullName evidence="1">Serine--tRNA ligase</fullName>
        <ecNumber evidence="1">6.1.1.11</ecNumber>
    </recommendedName>
    <alternativeName>
        <fullName evidence="1">Seryl-tRNA synthetase</fullName>
        <shortName evidence="1">SerRS</shortName>
    </alternativeName>
    <alternativeName>
        <fullName evidence="1">Seryl-tRNA(Ser/Sec) synthetase</fullName>
    </alternativeName>
</protein>
<reference key="1">
    <citation type="submission" date="2005-09" db="EMBL/GenBank/DDBJ databases">
        <authorList>
            <person name="Glass J.I."/>
            <person name="Lartigue C."/>
            <person name="Pfannkoch C."/>
            <person name="Baden-Tillson H."/>
            <person name="Smith H.O."/>
            <person name="Venter J.C."/>
            <person name="Roske K."/>
            <person name="Wise K.S."/>
            <person name="Calcutt M.J."/>
            <person name="Nelson W.C."/>
            <person name="Nierman W.C."/>
        </authorList>
    </citation>
    <scope>NUCLEOTIDE SEQUENCE [LARGE SCALE GENOMIC DNA]</scope>
    <source>
        <strain>California kid / ATCC 27343 / NCTC 10154</strain>
    </source>
</reference>
<proteinExistence type="inferred from homology"/>
<comment type="function">
    <text evidence="1">Catalyzes the attachment of serine to tRNA(Ser). Is also able to aminoacylate tRNA(Sec) with serine, to form the misacylated tRNA L-seryl-tRNA(Sec), which will be further converted into selenocysteinyl-tRNA(Sec).</text>
</comment>
<comment type="catalytic activity">
    <reaction evidence="1">
        <text>tRNA(Ser) + L-serine + ATP = L-seryl-tRNA(Ser) + AMP + diphosphate + H(+)</text>
        <dbReference type="Rhea" id="RHEA:12292"/>
        <dbReference type="Rhea" id="RHEA-COMP:9669"/>
        <dbReference type="Rhea" id="RHEA-COMP:9703"/>
        <dbReference type="ChEBI" id="CHEBI:15378"/>
        <dbReference type="ChEBI" id="CHEBI:30616"/>
        <dbReference type="ChEBI" id="CHEBI:33019"/>
        <dbReference type="ChEBI" id="CHEBI:33384"/>
        <dbReference type="ChEBI" id="CHEBI:78442"/>
        <dbReference type="ChEBI" id="CHEBI:78533"/>
        <dbReference type="ChEBI" id="CHEBI:456215"/>
        <dbReference type="EC" id="6.1.1.11"/>
    </reaction>
</comment>
<comment type="catalytic activity">
    <reaction evidence="1">
        <text>tRNA(Sec) + L-serine + ATP = L-seryl-tRNA(Sec) + AMP + diphosphate + H(+)</text>
        <dbReference type="Rhea" id="RHEA:42580"/>
        <dbReference type="Rhea" id="RHEA-COMP:9742"/>
        <dbReference type="Rhea" id="RHEA-COMP:10128"/>
        <dbReference type="ChEBI" id="CHEBI:15378"/>
        <dbReference type="ChEBI" id="CHEBI:30616"/>
        <dbReference type="ChEBI" id="CHEBI:33019"/>
        <dbReference type="ChEBI" id="CHEBI:33384"/>
        <dbReference type="ChEBI" id="CHEBI:78442"/>
        <dbReference type="ChEBI" id="CHEBI:78533"/>
        <dbReference type="ChEBI" id="CHEBI:456215"/>
        <dbReference type="EC" id="6.1.1.11"/>
    </reaction>
</comment>
<comment type="pathway">
    <text evidence="1">Aminoacyl-tRNA biosynthesis; selenocysteinyl-tRNA(Sec) biosynthesis; L-seryl-tRNA(Sec) from L-serine and tRNA(Sec): step 1/1.</text>
</comment>
<comment type="subunit">
    <text evidence="1">Homodimer. The tRNA molecule binds across the dimer.</text>
</comment>
<comment type="subcellular location">
    <subcellularLocation>
        <location evidence="1">Cytoplasm</location>
    </subcellularLocation>
</comment>
<comment type="domain">
    <text evidence="1">Consists of two distinct domains, a catalytic core and a N-terminal extension that is involved in tRNA binding.</text>
</comment>
<comment type="similarity">
    <text evidence="1">Belongs to the class-II aminoacyl-tRNA synthetase family. Type-1 seryl-tRNA synthetase subfamily.</text>
</comment>
<evidence type="ECO:0000255" key="1">
    <source>
        <dbReference type="HAMAP-Rule" id="MF_00176"/>
    </source>
</evidence>
<sequence>MLDINYIEQNLDEVIQRLNKRNQQDYSDDLKYVVSKNLKRKEILVKSEALKSRKNQLSKEIGTLLKEKKVDQSEQAKIEVINLNEQIIKLDEELRVVNDQILEKLLYIPNLPHKDIYFGKSDEDNVEIRKSNHSNLLKHSTPHWQIATKLGLVDFEKGVKLSGTRFLIYTGLGSKLVRSIADLLLKRHEKHGYKEIFCPLIVNKSAMLGTGQLPKFSEDMYQVGEQYLIPTSEVPLTNLHANEILAYDVLPLKYTSFTQCFRQEAGSAGRDTKGMIRLHQFNKVELVKIVHPEESMNELEMLIKDAEDVLNMFDLPYRVVELCSGDIGFSSAKTYDLEVWFPEQNKYREISSCSNCTDFQARNMQTRFKDKDSKIKLVHTLNGSGVAVDRLIAAILENYWDGEKLILPTLLRPYFDNQEFIK</sequence>
<gene>
    <name evidence="1" type="primary">serS</name>
    <name type="ordered locus">MCAP_0839</name>
</gene>
<dbReference type="EC" id="6.1.1.11" evidence="1"/>
<dbReference type="EMBL" id="CP000123">
    <property type="protein sequence ID" value="ABC01676.1"/>
    <property type="molecule type" value="Genomic_DNA"/>
</dbReference>
<dbReference type="RefSeq" id="WP_011387665.1">
    <property type="nucleotide sequence ID" value="NC_007633.1"/>
</dbReference>
<dbReference type="SMR" id="Q2SR32"/>
<dbReference type="GeneID" id="23778208"/>
<dbReference type="KEGG" id="mcp:MCAP_0839"/>
<dbReference type="HOGENOM" id="CLU_023797_0_1_14"/>
<dbReference type="PhylomeDB" id="Q2SR32"/>
<dbReference type="UniPathway" id="UPA00906">
    <property type="reaction ID" value="UER00895"/>
</dbReference>
<dbReference type="Proteomes" id="UP000001928">
    <property type="component" value="Chromosome"/>
</dbReference>
<dbReference type="GO" id="GO:0005737">
    <property type="term" value="C:cytoplasm"/>
    <property type="evidence" value="ECO:0007669"/>
    <property type="project" value="UniProtKB-SubCell"/>
</dbReference>
<dbReference type="GO" id="GO:0005524">
    <property type="term" value="F:ATP binding"/>
    <property type="evidence" value="ECO:0007669"/>
    <property type="project" value="UniProtKB-UniRule"/>
</dbReference>
<dbReference type="GO" id="GO:0004828">
    <property type="term" value="F:serine-tRNA ligase activity"/>
    <property type="evidence" value="ECO:0007669"/>
    <property type="project" value="UniProtKB-UniRule"/>
</dbReference>
<dbReference type="GO" id="GO:0016260">
    <property type="term" value="P:selenocysteine biosynthetic process"/>
    <property type="evidence" value="ECO:0007669"/>
    <property type="project" value="UniProtKB-UniRule"/>
</dbReference>
<dbReference type="GO" id="GO:0006434">
    <property type="term" value="P:seryl-tRNA aminoacylation"/>
    <property type="evidence" value="ECO:0007669"/>
    <property type="project" value="UniProtKB-UniRule"/>
</dbReference>
<dbReference type="CDD" id="cd00770">
    <property type="entry name" value="SerRS_core"/>
    <property type="match status" value="1"/>
</dbReference>
<dbReference type="Gene3D" id="3.30.930.10">
    <property type="entry name" value="Bira Bifunctional Protein, Domain 2"/>
    <property type="match status" value="1"/>
</dbReference>
<dbReference type="Gene3D" id="1.10.287.40">
    <property type="entry name" value="Serine-tRNA synthetase, tRNA binding domain"/>
    <property type="match status" value="1"/>
</dbReference>
<dbReference type="HAMAP" id="MF_00176">
    <property type="entry name" value="Ser_tRNA_synth_type1"/>
    <property type="match status" value="1"/>
</dbReference>
<dbReference type="InterPro" id="IPR002314">
    <property type="entry name" value="aa-tRNA-synt_IIb"/>
</dbReference>
<dbReference type="InterPro" id="IPR006195">
    <property type="entry name" value="aa-tRNA-synth_II"/>
</dbReference>
<dbReference type="InterPro" id="IPR045864">
    <property type="entry name" value="aa-tRNA-synth_II/BPL/LPL"/>
</dbReference>
<dbReference type="InterPro" id="IPR002317">
    <property type="entry name" value="Ser-tRNA-ligase_type_1"/>
</dbReference>
<dbReference type="InterPro" id="IPR015866">
    <property type="entry name" value="Ser-tRNA-synth_1_N"/>
</dbReference>
<dbReference type="InterPro" id="IPR042103">
    <property type="entry name" value="SerRS_1_N_sf"/>
</dbReference>
<dbReference type="InterPro" id="IPR033729">
    <property type="entry name" value="SerRS_core"/>
</dbReference>
<dbReference type="InterPro" id="IPR010978">
    <property type="entry name" value="tRNA-bd_arm"/>
</dbReference>
<dbReference type="NCBIfam" id="TIGR00414">
    <property type="entry name" value="serS"/>
    <property type="match status" value="1"/>
</dbReference>
<dbReference type="PANTHER" id="PTHR43697:SF1">
    <property type="entry name" value="SERINE--TRNA LIGASE"/>
    <property type="match status" value="1"/>
</dbReference>
<dbReference type="PANTHER" id="PTHR43697">
    <property type="entry name" value="SERYL-TRNA SYNTHETASE"/>
    <property type="match status" value="1"/>
</dbReference>
<dbReference type="Pfam" id="PF02403">
    <property type="entry name" value="Seryl_tRNA_N"/>
    <property type="match status" value="1"/>
</dbReference>
<dbReference type="Pfam" id="PF00587">
    <property type="entry name" value="tRNA-synt_2b"/>
    <property type="match status" value="1"/>
</dbReference>
<dbReference type="PIRSF" id="PIRSF001529">
    <property type="entry name" value="Ser-tRNA-synth_IIa"/>
    <property type="match status" value="1"/>
</dbReference>
<dbReference type="PRINTS" id="PR00981">
    <property type="entry name" value="TRNASYNTHSER"/>
</dbReference>
<dbReference type="SUPFAM" id="SSF55681">
    <property type="entry name" value="Class II aaRS and biotin synthetases"/>
    <property type="match status" value="1"/>
</dbReference>
<dbReference type="SUPFAM" id="SSF46589">
    <property type="entry name" value="tRNA-binding arm"/>
    <property type="match status" value="1"/>
</dbReference>
<dbReference type="PROSITE" id="PS50862">
    <property type="entry name" value="AA_TRNA_LIGASE_II"/>
    <property type="match status" value="1"/>
</dbReference>
<keyword id="KW-0030">Aminoacyl-tRNA synthetase</keyword>
<keyword id="KW-0067">ATP-binding</keyword>
<keyword id="KW-0963">Cytoplasm</keyword>
<keyword id="KW-0436">Ligase</keyword>
<keyword id="KW-0547">Nucleotide-binding</keyword>
<keyword id="KW-0648">Protein biosynthesis</keyword>
<feature type="chain" id="PRO_1000019736" description="Serine--tRNA ligase">
    <location>
        <begin position="1"/>
        <end position="422"/>
    </location>
</feature>
<feature type="binding site" evidence="1">
    <location>
        <begin position="231"/>
        <end position="233"/>
    </location>
    <ligand>
        <name>L-serine</name>
        <dbReference type="ChEBI" id="CHEBI:33384"/>
    </ligand>
</feature>
<feature type="binding site" evidence="1">
    <location>
        <begin position="262"/>
        <end position="264"/>
    </location>
    <ligand>
        <name>ATP</name>
        <dbReference type="ChEBI" id="CHEBI:30616"/>
    </ligand>
</feature>
<feature type="binding site" evidence="1">
    <location>
        <position position="285"/>
    </location>
    <ligand>
        <name>L-serine</name>
        <dbReference type="ChEBI" id="CHEBI:33384"/>
    </ligand>
</feature>
<feature type="binding site" evidence="1">
    <location>
        <begin position="349"/>
        <end position="352"/>
    </location>
    <ligand>
        <name>ATP</name>
        <dbReference type="ChEBI" id="CHEBI:30616"/>
    </ligand>
</feature>
<feature type="binding site" evidence="1">
    <location>
        <position position="384"/>
    </location>
    <ligand>
        <name>L-serine</name>
        <dbReference type="ChEBI" id="CHEBI:33384"/>
    </ligand>
</feature>
<accession>Q2SR32</accession>